<keyword id="KW-0274">FAD</keyword>
<keyword id="KW-0285">Flavoprotein</keyword>
<keyword id="KW-0521">NADP</keyword>
<keyword id="KW-0560">Oxidoreductase</keyword>
<keyword id="KW-0676">Redox-active center</keyword>
<proteinExistence type="inferred from homology"/>
<gene>
    <name evidence="2" type="primary">cdr</name>
    <name type="ordered locus">SAV0970</name>
</gene>
<comment type="function">
    <text evidence="2">Catalyzes specifically the NADPH-dependent reduction of coenzyme A disulfide.</text>
</comment>
<comment type="catalytic activity">
    <reaction evidence="2">
        <text>NADP(+) + 2 CoA = CoA-disulfide + NADPH + H(+)</text>
        <dbReference type="Rhea" id="RHEA:14705"/>
        <dbReference type="ChEBI" id="CHEBI:15378"/>
        <dbReference type="ChEBI" id="CHEBI:57287"/>
        <dbReference type="ChEBI" id="CHEBI:57783"/>
        <dbReference type="ChEBI" id="CHEBI:58349"/>
        <dbReference type="ChEBI" id="CHEBI:62209"/>
        <dbReference type="EC" id="1.8.1.14"/>
    </reaction>
</comment>
<comment type="cofactor">
    <cofactor evidence="2">
        <name>FAD</name>
        <dbReference type="ChEBI" id="CHEBI:57692"/>
    </cofactor>
    <text evidence="2">Binds 1 FAD per subunit.</text>
</comment>
<comment type="subunit">
    <text evidence="2">Homodimer.</text>
</comment>
<comment type="domain">
    <text evidence="2">Contains 2 FAD binding domains and a single NADPH binding domain.</text>
</comment>
<comment type="miscellaneous">
    <text evidence="2">Reduction of disulfides occurs by a thiol-disulfide exchange reaction, but involves only a single catalytic cysteine residue that forms a stable mixed disulfide with CoA during catalysis.</text>
</comment>
<comment type="similarity">
    <text evidence="2">Belongs to the class-III pyridine nucleotide-disulfide oxidoreductase family.</text>
</comment>
<sequence>MPKIVVVGAVAGGATCASQIRRLDKESDIIIFEKDRDMSFANCALPYVIGEVVEDRKYALAYTPEKFYDRKQITVKTYHEVIAINDERQTVTVLNRKTNEQFEESYDKLILSPGASANSLGFESDITFTLRNLEDTDAIDQFIKANQVDKVLVIGAGYVSLEVLENLYERGLHPTLIHRSDKINKLMDADMNQPILDELDKREIPYRLNEEIDAINGNEITFKSGKVEHYDMIIEGVGTHPNSKFIESSNIKLDRKGFIPVNDKFETNVPNIYAIGDIATSHYRHVDLPASVPLAWGAHRAASIVAEQIAGNDTIEFKGFLGNNIVKFFDYTFASVGVKPNELKQFDYKMVEVTQGAHANYYPGNSPLHLRVYYDTSNRQILRAAAVGKEGADKRIDVLSMAMMNQLTVDELTEFEVAYAPPYSHPKDLINMIGYKAK</sequence>
<organism>
    <name type="scientific">Staphylococcus aureus (strain Mu50 / ATCC 700699)</name>
    <dbReference type="NCBI Taxonomy" id="158878"/>
    <lineage>
        <taxon>Bacteria</taxon>
        <taxon>Bacillati</taxon>
        <taxon>Bacillota</taxon>
        <taxon>Bacilli</taxon>
        <taxon>Bacillales</taxon>
        <taxon>Staphylococcaceae</taxon>
        <taxon>Staphylococcus</taxon>
    </lineage>
</organism>
<name>CDR_STAAM</name>
<reference key="1">
    <citation type="journal article" date="2001" name="Lancet">
        <title>Whole genome sequencing of meticillin-resistant Staphylococcus aureus.</title>
        <authorList>
            <person name="Kuroda M."/>
            <person name="Ohta T."/>
            <person name="Uchiyama I."/>
            <person name="Baba T."/>
            <person name="Yuzawa H."/>
            <person name="Kobayashi I."/>
            <person name="Cui L."/>
            <person name="Oguchi A."/>
            <person name="Aoki K."/>
            <person name="Nagai Y."/>
            <person name="Lian J.-Q."/>
            <person name="Ito T."/>
            <person name="Kanamori M."/>
            <person name="Matsumaru H."/>
            <person name="Maruyama A."/>
            <person name="Murakami H."/>
            <person name="Hosoyama A."/>
            <person name="Mizutani-Ui Y."/>
            <person name="Takahashi N.K."/>
            <person name="Sawano T."/>
            <person name="Inoue R."/>
            <person name="Kaito C."/>
            <person name="Sekimizu K."/>
            <person name="Hirakawa H."/>
            <person name="Kuhara S."/>
            <person name="Goto S."/>
            <person name="Yabuzaki J."/>
            <person name="Kanehisa M."/>
            <person name="Yamashita A."/>
            <person name="Oshima K."/>
            <person name="Furuya K."/>
            <person name="Yoshino C."/>
            <person name="Shiba T."/>
            <person name="Hattori M."/>
            <person name="Ogasawara N."/>
            <person name="Hayashi H."/>
            <person name="Hiramatsu K."/>
        </authorList>
    </citation>
    <scope>NUCLEOTIDE SEQUENCE [LARGE SCALE GENOMIC DNA]</scope>
    <source>
        <strain>Mu50 / ATCC 700699</strain>
    </source>
</reference>
<feature type="initiator methionine" description="Removed" evidence="1">
    <location>
        <position position="1"/>
    </location>
</feature>
<feature type="chain" id="PRO_0000184690" description="Coenzyme A disulfide reductase">
    <location>
        <begin position="2"/>
        <end position="438"/>
    </location>
</feature>
<feature type="active site" description="Nucleophile" evidence="2">
    <location>
        <position position="43"/>
    </location>
</feature>
<feature type="active site" description="Redox-active" evidence="2">
    <location>
        <position position="43"/>
    </location>
</feature>
<feature type="binding site" evidence="2">
    <location>
        <begin position="8"/>
        <end position="33"/>
    </location>
    <ligand>
        <name>FAD</name>
        <dbReference type="ChEBI" id="CHEBI:57692"/>
    </ligand>
</feature>
<feature type="binding site" evidence="2">
    <location>
        <position position="15"/>
    </location>
    <ligand>
        <name>substrate</name>
    </ligand>
</feature>
<feature type="binding site" evidence="2">
    <location>
        <position position="19"/>
    </location>
    <ligand>
        <name>substrate</name>
    </ligand>
</feature>
<feature type="binding site" evidence="2">
    <location>
        <position position="22"/>
    </location>
    <ligand>
        <name>substrate</name>
    </ligand>
</feature>
<feature type="binding site" evidence="2">
    <location>
        <position position="39"/>
    </location>
    <ligand>
        <name>substrate</name>
    </ligand>
</feature>
<feature type="binding site" evidence="2">
    <location>
        <position position="42"/>
    </location>
    <ligand>
        <name>substrate</name>
    </ligand>
</feature>
<feature type="binding site" evidence="2">
    <location>
        <position position="71"/>
    </location>
    <ligand>
        <name>substrate</name>
    </ligand>
</feature>
<feature type="binding site" evidence="2">
    <location>
        <begin position="151"/>
        <end position="166"/>
    </location>
    <ligand>
        <name>NADP(+)</name>
        <dbReference type="ChEBI" id="CHEBI:58349"/>
    </ligand>
</feature>
<feature type="binding site" evidence="2">
    <location>
        <begin position="267"/>
        <end position="277"/>
    </location>
    <ligand>
        <name>FAD</name>
        <dbReference type="ChEBI" id="CHEBI:57692"/>
    </ligand>
</feature>
<feature type="binding site" evidence="2">
    <location>
        <position position="299"/>
    </location>
    <ligand>
        <name>substrate</name>
    </ligand>
</feature>
<feature type="binding site" evidence="2">
    <location>
        <position position="419"/>
    </location>
    <ligand>
        <name>FAD</name>
        <dbReference type="ChEBI" id="CHEBI:57692"/>
    </ligand>
</feature>
<feature type="binding site" evidence="2">
    <location>
        <position position="427"/>
    </location>
    <ligand>
        <name>substrate</name>
    </ligand>
</feature>
<protein>
    <recommendedName>
        <fullName evidence="2">Coenzyme A disulfide reductase</fullName>
        <shortName evidence="2">CoA-disulfide reductase</shortName>
        <shortName evidence="2">CoADR</shortName>
        <ecNumber evidence="2">1.8.1.14</ecNumber>
    </recommendedName>
</protein>
<evidence type="ECO:0000250" key="1"/>
<evidence type="ECO:0000255" key="2">
    <source>
        <dbReference type="HAMAP-Rule" id="MF_01608"/>
    </source>
</evidence>
<accession>Q99VC0</accession>
<dbReference type="EC" id="1.8.1.14" evidence="2"/>
<dbReference type="EMBL" id="BA000017">
    <property type="protein sequence ID" value="BAB57132.1"/>
    <property type="molecule type" value="Genomic_DNA"/>
</dbReference>
<dbReference type="RefSeq" id="WP_001124506.1">
    <property type="nucleotide sequence ID" value="NC_002758.2"/>
</dbReference>
<dbReference type="SMR" id="Q99VC0"/>
<dbReference type="KEGG" id="sav:SAV0970"/>
<dbReference type="HOGENOM" id="CLU_003291_1_3_9"/>
<dbReference type="PhylomeDB" id="Q99VC0"/>
<dbReference type="Proteomes" id="UP000002481">
    <property type="component" value="Chromosome"/>
</dbReference>
<dbReference type="GO" id="GO:0050451">
    <property type="term" value="F:CoA-disulfide reductase (NADPH) activity"/>
    <property type="evidence" value="ECO:0007669"/>
    <property type="project" value="UniProtKB-UniRule"/>
</dbReference>
<dbReference type="GO" id="GO:0050660">
    <property type="term" value="F:flavin adenine dinucleotide binding"/>
    <property type="evidence" value="ECO:0007669"/>
    <property type="project" value="UniProtKB-UniRule"/>
</dbReference>
<dbReference type="GO" id="GO:0050661">
    <property type="term" value="F:NADP binding"/>
    <property type="evidence" value="ECO:0007669"/>
    <property type="project" value="UniProtKB-UniRule"/>
</dbReference>
<dbReference type="GO" id="GO:0003756">
    <property type="term" value="F:protein disulfide isomerase activity"/>
    <property type="evidence" value="ECO:0007669"/>
    <property type="project" value="UniProtKB-UniRule"/>
</dbReference>
<dbReference type="Gene3D" id="3.30.390.30">
    <property type="match status" value="1"/>
</dbReference>
<dbReference type="Gene3D" id="3.50.50.60">
    <property type="entry name" value="FAD/NAD(P)-binding domain"/>
    <property type="match status" value="2"/>
</dbReference>
<dbReference type="HAMAP" id="MF_01608">
    <property type="entry name" value="CoA_diS_reduct"/>
    <property type="match status" value="1"/>
</dbReference>
<dbReference type="InterPro" id="IPR017758">
    <property type="entry name" value="CoA_disulphide_reductase"/>
</dbReference>
<dbReference type="InterPro" id="IPR023536">
    <property type="entry name" value="CoA_disulphide_reductase_staph"/>
</dbReference>
<dbReference type="InterPro" id="IPR050260">
    <property type="entry name" value="FAD-bd_OxRdtase"/>
</dbReference>
<dbReference type="InterPro" id="IPR036188">
    <property type="entry name" value="FAD/NAD-bd_sf"/>
</dbReference>
<dbReference type="InterPro" id="IPR023753">
    <property type="entry name" value="FAD/NAD-binding_dom"/>
</dbReference>
<dbReference type="InterPro" id="IPR016156">
    <property type="entry name" value="FAD/NAD-linked_Rdtase_dimer_sf"/>
</dbReference>
<dbReference type="InterPro" id="IPR004099">
    <property type="entry name" value="Pyr_nucl-diS_OxRdtase_dimer"/>
</dbReference>
<dbReference type="NCBIfam" id="TIGR03385">
    <property type="entry name" value="CoA_CoA_reduc"/>
    <property type="match status" value="1"/>
</dbReference>
<dbReference type="NCBIfam" id="NF010037">
    <property type="entry name" value="PRK13512.1"/>
    <property type="match status" value="1"/>
</dbReference>
<dbReference type="PANTHER" id="PTHR43429:SF1">
    <property type="entry name" value="NAD(P)H SULFUR OXIDOREDUCTASE (COA-DEPENDENT)"/>
    <property type="match status" value="1"/>
</dbReference>
<dbReference type="PANTHER" id="PTHR43429">
    <property type="entry name" value="PYRIDINE NUCLEOTIDE-DISULFIDE OXIDOREDUCTASE DOMAIN-CONTAINING"/>
    <property type="match status" value="1"/>
</dbReference>
<dbReference type="Pfam" id="PF07992">
    <property type="entry name" value="Pyr_redox_2"/>
    <property type="match status" value="1"/>
</dbReference>
<dbReference type="Pfam" id="PF02852">
    <property type="entry name" value="Pyr_redox_dim"/>
    <property type="match status" value="1"/>
</dbReference>
<dbReference type="PRINTS" id="PR00368">
    <property type="entry name" value="FADPNR"/>
</dbReference>
<dbReference type="PRINTS" id="PR00411">
    <property type="entry name" value="PNDRDTASEI"/>
</dbReference>
<dbReference type="SUPFAM" id="SSF51905">
    <property type="entry name" value="FAD/NAD(P)-binding domain"/>
    <property type="match status" value="1"/>
</dbReference>
<dbReference type="SUPFAM" id="SSF55424">
    <property type="entry name" value="FAD/NAD-linked reductases, dimerisation (C-terminal) domain"/>
    <property type="match status" value="1"/>
</dbReference>